<proteinExistence type="inferred from homology"/>
<keyword id="KW-0067">ATP-binding</keyword>
<keyword id="KW-0963">Cytoplasm</keyword>
<keyword id="KW-0227">DNA damage</keyword>
<keyword id="KW-0233">DNA recombination</keyword>
<keyword id="KW-0234">DNA repair</keyword>
<keyword id="KW-0238">DNA-binding</keyword>
<keyword id="KW-0547">Nucleotide-binding</keyword>
<keyword id="KW-1185">Reference proteome</keyword>
<keyword id="KW-0742">SOS response</keyword>
<dbReference type="EMBL" id="AJ749949">
    <property type="protein sequence ID" value="CAG46383.1"/>
    <property type="molecule type" value="Genomic_DNA"/>
</dbReference>
<dbReference type="RefSeq" id="WP_003013734.1">
    <property type="nucleotide sequence ID" value="NZ_CP010290.1"/>
</dbReference>
<dbReference type="RefSeq" id="YP_170644.1">
    <property type="nucleotide sequence ID" value="NC_006570.2"/>
</dbReference>
<dbReference type="SMR" id="Q5NE98"/>
<dbReference type="STRING" id="177416.FTT_1750"/>
<dbReference type="DNASU" id="3191643"/>
<dbReference type="EnsemblBacteria" id="CAG46383">
    <property type="protein sequence ID" value="CAG46383"/>
    <property type="gene ID" value="FTT_1750"/>
</dbReference>
<dbReference type="KEGG" id="ftu:FTT_1750"/>
<dbReference type="eggNOG" id="COG0468">
    <property type="taxonomic scope" value="Bacteria"/>
</dbReference>
<dbReference type="OrthoDB" id="9776733at2"/>
<dbReference type="Proteomes" id="UP000001174">
    <property type="component" value="Chromosome"/>
</dbReference>
<dbReference type="GO" id="GO:0005829">
    <property type="term" value="C:cytosol"/>
    <property type="evidence" value="ECO:0007669"/>
    <property type="project" value="TreeGrafter"/>
</dbReference>
<dbReference type="GO" id="GO:0005524">
    <property type="term" value="F:ATP binding"/>
    <property type="evidence" value="ECO:0007669"/>
    <property type="project" value="UniProtKB-UniRule"/>
</dbReference>
<dbReference type="GO" id="GO:0016887">
    <property type="term" value="F:ATP hydrolysis activity"/>
    <property type="evidence" value="ECO:0007669"/>
    <property type="project" value="InterPro"/>
</dbReference>
<dbReference type="GO" id="GO:0140664">
    <property type="term" value="F:ATP-dependent DNA damage sensor activity"/>
    <property type="evidence" value="ECO:0007669"/>
    <property type="project" value="InterPro"/>
</dbReference>
<dbReference type="GO" id="GO:0003684">
    <property type="term" value="F:damaged DNA binding"/>
    <property type="evidence" value="ECO:0007669"/>
    <property type="project" value="UniProtKB-UniRule"/>
</dbReference>
<dbReference type="GO" id="GO:0003697">
    <property type="term" value="F:single-stranded DNA binding"/>
    <property type="evidence" value="ECO:0007669"/>
    <property type="project" value="UniProtKB-UniRule"/>
</dbReference>
<dbReference type="GO" id="GO:0006310">
    <property type="term" value="P:DNA recombination"/>
    <property type="evidence" value="ECO:0007669"/>
    <property type="project" value="UniProtKB-UniRule"/>
</dbReference>
<dbReference type="GO" id="GO:0006281">
    <property type="term" value="P:DNA repair"/>
    <property type="evidence" value="ECO:0007669"/>
    <property type="project" value="UniProtKB-UniRule"/>
</dbReference>
<dbReference type="GO" id="GO:0009432">
    <property type="term" value="P:SOS response"/>
    <property type="evidence" value="ECO:0007669"/>
    <property type="project" value="UniProtKB-UniRule"/>
</dbReference>
<dbReference type="CDD" id="cd00983">
    <property type="entry name" value="RecA"/>
    <property type="match status" value="1"/>
</dbReference>
<dbReference type="FunFam" id="3.40.50.300:FF:000087">
    <property type="entry name" value="Recombinase RecA"/>
    <property type="match status" value="1"/>
</dbReference>
<dbReference type="Gene3D" id="3.40.50.300">
    <property type="entry name" value="P-loop containing nucleotide triphosphate hydrolases"/>
    <property type="match status" value="1"/>
</dbReference>
<dbReference type="HAMAP" id="MF_00268">
    <property type="entry name" value="RecA"/>
    <property type="match status" value="1"/>
</dbReference>
<dbReference type="InterPro" id="IPR003593">
    <property type="entry name" value="AAA+_ATPase"/>
</dbReference>
<dbReference type="InterPro" id="IPR013765">
    <property type="entry name" value="DNA_recomb/repair_RecA"/>
</dbReference>
<dbReference type="InterPro" id="IPR020584">
    <property type="entry name" value="DNA_recomb/repair_RecA_CS"/>
</dbReference>
<dbReference type="InterPro" id="IPR027417">
    <property type="entry name" value="P-loop_NTPase"/>
</dbReference>
<dbReference type="InterPro" id="IPR049261">
    <property type="entry name" value="RecA-like_C"/>
</dbReference>
<dbReference type="InterPro" id="IPR049428">
    <property type="entry name" value="RecA-like_N"/>
</dbReference>
<dbReference type="InterPro" id="IPR020588">
    <property type="entry name" value="RecA_ATP-bd"/>
</dbReference>
<dbReference type="InterPro" id="IPR023400">
    <property type="entry name" value="RecA_C_sf"/>
</dbReference>
<dbReference type="InterPro" id="IPR020587">
    <property type="entry name" value="RecA_monomer-monomer_interface"/>
</dbReference>
<dbReference type="NCBIfam" id="TIGR02012">
    <property type="entry name" value="tigrfam_recA"/>
    <property type="match status" value="1"/>
</dbReference>
<dbReference type="PANTHER" id="PTHR45900:SF1">
    <property type="entry name" value="MITOCHONDRIAL DNA REPAIR PROTEIN RECA HOMOLOG-RELATED"/>
    <property type="match status" value="1"/>
</dbReference>
<dbReference type="PANTHER" id="PTHR45900">
    <property type="entry name" value="RECA"/>
    <property type="match status" value="1"/>
</dbReference>
<dbReference type="Pfam" id="PF00154">
    <property type="entry name" value="RecA"/>
    <property type="match status" value="1"/>
</dbReference>
<dbReference type="Pfam" id="PF21096">
    <property type="entry name" value="RecA_C"/>
    <property type="match status" value="1"/>
</dbReference>
<dbReference type="PRINTS" id="PR00142">
    <property type="entry name" value="RECA"/>
</dbReference>
<dbReference type="SMART" id="SM00382">
    <property type="entry name" value="AAA"/>
    <property type="match status" value="1"/>
</dbReference>
<dbReference type="SUPFAM" id="SSF52540">
    <property type="entry name" value="P-loop containing nucleoside triphosphate hydrolases"/>
    <property type="match status" value="1"/>
</dbReference>
<dbReference type="SUPFAM" id="SSF54752">
    <property type="entry name" value="RecA protein, C-terminal domain"/>
    <property type="match status" value="1"/>
</dbReference>
<dbReference type="PROSITE" id="PS00321">
    <property type="entry name" value="RECA_1"/>
    <property type="match status" value="1"/>
</dbReference>
<dbReference type="PROSITE" id="PS50162">
    <property type="entry name" value="RECA_2"/>
    <property type="match status" value="1"/>
</dbReference>
<dbReference type="PROSITE" id="PS50163">
    <property type="entry name" value="RECA_3"/>
    <property type="match status" value="1"/>
</dbReference>
<accession>Q5NE98</accession>
<comment type="function">
    <text evidence="1">Can catalyze the hydrolysis of ATP in the presence of single-stranded DNA, the ATP-dependent uptake of single-stranded DNA by duplex DNA, and the ATP-dependent hybridization of homologous single-stranded DNAs. It interacts with LexA causing its activation and leading to its autocatalytic cleavage.</text>
</comment>
<comment type="subcellular location">
    <subcellularLocation>
        <location evidence="1">Cytoplasm</location>
    </subcellularLocation>
</comment>
<comment type="similarity">
    <text evidence="1">Belongs to the RecA family.</text>
</comment>
<sequence length="359" mass="38834">MSKEKALESALSQIEKQFGKGAIMRLGDQEAAHDIDVIPSGIIALDVALGIGGYPKGRIIEIYGHESSGKTTLTLLAIAQCQKQGGTAAFVDAEHALDPKYAKLLGVDVDNLIVSQPDTGEQALEIADMLVRSGGVDIVVIDSVAALTPKAEIEGDMGDSHMGLQARLMSQALRKLTANIKRSNTLVIFINQIRMKIGVMFGNPETTTGGNALKFYSSVRLEVKKGGSIKDGIDVSGNEIKVKVVKNKVAPPFKQADFELIYGEGISLEAELIDLGAKYNIIEKSGAWYSYKGKKIGQGKEKSKEYLKENTAERDEIERAILELLLPNKYSNKDSNDSPKEGSKIKTKVNPAVTQDELI</sequence>
<name>RECA_FRATT</name>
<reference key="1">
    <citation type="journal article" date="2005" name="Nat. Genet.">
        <title>The complete genome sequence of Francisella tularensis, the causative agent of tularemia.</title>
        <authorList>
            <person name="Larsson P."/>
            <person name="Oyston P.C.F."/>
            <person name="Chain P."/>
            <person name="Chu M.C."/>
            <person name="Duffield M."/>
            <person name="Fuxelius H.-H."/>
            <person name="Garcia E."/>
            <person name="Haelltorp G."/>
            <person name="Johansson D."/>
            <person name="Isherwood K.E."/>
            <person name="Karp P.D."/>
            <person name="Larsson E."/>
            <person name="Liu Y."/>
            <person name="Michell S."/>
            <person name="Prior J."/>
            <person name="Prior R."/>
            <person name="Malfatti S."/>
            <person name="Sjoestedt A."/>
            <person name="Svensson K."/>
            <person name="Thompson N."/>
            <person name="Vergez L."/>
            <person name="Wagg J.K."/>
            <person name="Wren B.W."/>
            <person name="Lindler L.E."/>
            <person name="Andersson S.G.E."/>
            <person name="Forsman M."/>
            <person name="Titball R.W."/>
        </authorList>
    </citation>
    <scope>NUCLEOTIDE SEQUENCE [LARGE SCALE GENOMIC DNA]</scope>
    <source>
        <strain>SCHU S4 / Schu 4</strain>
    </source>
</reference>
<protein>
    <recommendedName>
        <fullName evidence="1">Protein RecA</fullName>
    </recommendedName>
    <alternativeName>
        <fullName evidence="1">Recombinase A</fullName>
    </alternativeName>
</protein>
<gene>
    <name evidence="1" type="primary">recA</name>
    <name type="ordered locus">FTT_1750</name>
</gene>
<evidence type="ECO:0000255" key="1">
    <source>
        <dbReference type="HAMAP-Rule" id="MF_00268"/>
    </source>
</evidence>
<evidence type="ECO:0000256" key="2">
    <source>
        <dbReference type="SAM" id="MobiDB-lite"/>
    </source>
</evidence>
<organism>
    <name type="scientific">Francisella tularensis subsp. tularensis (strain SCHU S4 / Schu 4)</name>
    <dbReference type="NCBI Taxonomy" id="177416"/>
    <lineage>
        <taxon>Bacteria</taxon>
        <taxon>Pseudomonadati</taxon>
        <taxon>Pseudomonadota</taxon>
        <taxon>Gammaproteobacteria</taxon>
        <taxon>Thiotrichales</taxon>
        <taxon>Francisellaceae</taxon>
        <taxon>Francisella</taxon>
    </lineage>
</organism>
<feature type="chain" id="PRO_0000122716" description="Protein RecA">
    <location>
        <begin position="1"/>
        <end position="359"/>
    </location>
</feature>
<feature type="region of interest" description="Disordered" evidence="2">
    <location>
        <begin position="329"/>
        <end position="359"/>
    </location>
</feature>
<feature type="compositionally biased region" description="Basic and acidic residues" evidence="2">
    <location>
        <begin position="331"/>
        <end position="344"/>
    </location>
</feature>
<feature type="binding site" evidence="1">
    <location>
        <begin position="64"/>
        <end position="71"/>
    </location>
    <ligand>
        <name>ATP</name>
        <dbReference type="ChEBI" id="CHEBI:30616"/>
    </ligand>
</feature>